<sequence length="663" mass="74638">MVKERCPKQAFQDSLEDIKERMKEKRIKKLAKVATVNKTLCTKVQILNSGSTAIKNYKANNTALALALEAEKLKTRQAQDLILGLKREHQRLIFEIFMLRRRLQSQQGRDTAESKLASLKDIIAKVTHNLLETASLLEPAHLLCSSANNNTPNPSKVEEKLSSGASAILRLPSHAPISDTLPKNVIPNRLEPEQRNFKDKVVLEANRNTAGVNRQSRGRRSHSNQPSFTSRLEECNNEDKTESGATMNKNVSLRRRASSLNICLEESLPLEDTNVNSEHTVVETERPFPTEEFSNESRTDREIDNVDNPASPLKVKCFPHANGSKMTGLASEAKQTSNKNKEEPRVGRERVKKGKAERVAVSQMKKPWENSKPRARSKSRDRSASKKSVAKEKMNSSLNSGDAFDFACEESIHVTPFRQNKQEESQNESSLEISSSEGELDDSLYKPYKDKSKNKNLKPDIAPVPLRSRSKRNTARKNSIAENELMSDVQAEANEKKITRNGLKRKSENSFTESAETYREKSFMPTCINTNNAIAENPEVKVFSDECNGGIIYTADEPSGASTPRISLSDVTNLPGNTDAKKHINLLFNEDEMKRSSTPSRKRRCKVSINYAEPKLSGKLRRGDPFTDSEFLQSPIFKNESKRNSLNRQSLSRYNEVFVGCRR</sequence>
<evidence type="ECO:0000250" key="1">
    <source>
        <dbReference type="UniProtKB" id="Q5FBB7"/>
    </source>
</evidence>
<evidence type="ECO:0000255" key="2"/>
<evidence type="ECO:0000256" key="3">
    <source>
        <dbReference type="SAM" id="MobiDB-lite"/>
    </source>
</evidence>
<evidence type="ECO:0000269" key="4">
    <source>
    </source>
</evidence>
<evidence type="ECO:0000305" key="5"/>
<comment type="function">
    <text evidence="4">Plays a central role in chromosome cohesion during mitosis by preventing premature dissociation of cohesin complex from centromeres after prophase, when most of cohesin complex dissociates from chromosomes arms. May act by preventing phosphorylation of the stag2 subunit of cohesin complex at the centromere, ensuring cohesin persistence at centromere until cohesin cleavage by espl1/separase at anaphase. May regulate kinetochore microtubule stability in mitosis, possibly to sense tension on mitotic chromosomes.</text>
</comment>
<comment type="subunit">
    <text>Binds microtubules.</text>
</comment>
<comment type="interaction">
    <interactant intactId="EBI-6977619">
        <id>Q4KLP8</id>
    </interactant>
    <interactant intactId="EBI-6977603">
        <id>Q91912</id>
        <label>Mad2</label>
    </interactant>
    <organismsDiffer>false</organismsDiffer>
    <experiments>16</experiments>
</comment>
<comment type="subcellular location">
    <subcellularLocation>
        <location evidence="4">Nucleus</location>
    </subcellularLocation>
    <subcellularLocation>
        <location evidence="4">Chromosome</location>
        <location evidence="4">Centromere</location>
    </subcellularLocation>
    <subcellularLocation>
        <location evidence="4">Chromosome</location>
        <location evidence="4">Centromere</location>
        <location evidence="4">Kinetochore</location>
    </subcellularLocation>
    <subcellularLocation>
        <location evidence="1">Nucleus speckle</location>
    </subcellularLocation>
    <text>Localizes to the centromere. At anaphase, it dissociates from centromeres when chromatids separate. Localizes to kinetochores.</text>
</comment>
<comment type="developmental stage">
    <text evidence="4">High level during prophase and prometaphase and weaker after the chromosomes attach to the spindle and align at the metaphase plate. During anaphase, it is degraded, allowing the separation of sister centromeres (at protein level).</text>
</comment>
<comment type="PTM">
    <text evidence="5">Ubiquitinated by the anaphase promoting complex (APC) at the onset of anaphase, conducting to its degradation.</text>
</comment>
<comment type="similarity">
    <text evidence="5">Belongs to the shugoshin family.</text>
</comment>
<accession>Q4KLP8</accession>
<reference key="1">
    <citation type="submission" date="2005-07" db="EMBL/GenBank/DDBJ databases">
        <authorList>
            <consortium name="NIH - Xenopus Gene Collection (XGC) project"/>
        </authorList>
    </citation>
    <scope>NUCLEOTIDE SEQUENCE [LARGE SCALE MRNA]</scope>
    <source>
        <tissue>Egg</tissue>
    </source>
</reference>
<reference key="2">
    <citation type="journal article" date="2004" name="Cell">
        <title>Vertebrate shugoshin links sister centromere cohesion and kinetochore microtubule stability in mitosis.</title>
        <authorList>
            <person name="Salic A."/>
            <person name="Waters J.C."/>
            <person name="Mitchison T.J."/>
        </authorList>
    </citation>
    <scope>FUNCTION</scope>
    <scope>SUBCELLULAR LOCATION</scope>
    <scope>PROBABLE UBIQUITINATION</scope>
    <scope>DEVELOPMENTAL STAGE</scope>
    <scope>INTERACTION WITH MICROTUBULES</scope>
</reference>
<name>SGO1_XENLA</name>
<organism>
    <name type="scientific">Xenopus laevis</name>
    <name type="common">African clawed frog</name>
    <dbReference type="NCBI Taxonomy" id="8355"/>
    <lineage>
        <taxon>Eukaryota</taxon>
        <taxon>Metazoa</taxon>
        <taxon>Chordata</taxon>
        <taxon>Craniata</taxon>
        <taxon>Vertebrata</taxon>
        <taxon>Euteleostomi</taxon>
        <taxon>Amphibia</taxon>
        <taxon>Batrachia</taxon>
        <taxon>Anura</taxon>
        <taxon>Pipoidea</taxon>
        <taxon>Pipidae</taxon>
        <taxon>Xenopodinae</taxon>
        <taxon>Xenopus</taxon>
        <taxon>Xenopus</taxon>
    </lineage>
</organism>
<gene>
    <name evidence="1" type="primary">sgo1</name>
    <name type="synonym">sgo</name>
    <name type="synonym">sgol1</name>
</gene>
<dbReference type="EMBL" id="BC099060">
    <property type="protein sequence ID" value="AAH99060.1"/>
    <property type="molecule type" value="mRNA"/>
</dbReference>
<dbReference type="RefSeq" id="NP_001090071.1">
    <property type="nucleotide sequence ID" value="NM_001096602.1"/>
</dbReference>
<dbReference type="SMR" id="Q4KLP8"/>
<dbReference type="IntAct" id="Q4KLP8">
    <property type="interactions" value="2"/>
</dbReference>
<dbReference type="MINT" id="Q4KLP8"/>
<dbReference type="DNASU" id="735145"/>
<dbReference type="GeneID" id="735145"/>
<dbReference type="KEGG" id="xla:735145"/>
<dbReference type="AGR" id="Xenbase:XB-GENE-940797"/>
<dbReference type="CTD" id="735145"/>
<dbReference type="Xenbase" id="XB-GENE-940797">
    <property type="gene designation" value="sgo1.L"/>
</dbReference>
<dbReference type="OMA" id="FNNLCQF"/>
<dbReference type="OrthoDB" id="9901374at2759"/>
<dbReference type="Proteomes" id="UP000186698">
    <property type="component" value="Chromosome 6L"/>
</dbReference>
<dbReference type="Bgee" id="735145">
    <property type="expression patterns" value="Expressed in egg cell and 19 other cell types or tissues"/>
</dbReference>
<dbReference type="GO" id="GO:0000776">
    <property type="term" value="C:kinetochore"/>
    <property type="evidence" value="ECO:0007669"/>
    <property type="project" value="UniProtKB-KW"/>
</dbReference>
<dbReference type="GO" id="GO:0005874">
    <property type="term" value="C:microtubule"/>
    <property type="evidence" value="ECO:0007669"/>
    <property type="project" value="UniProtKB-KW"/>
</dbReference>
<dbReference type="GO" id="GO:0016607">
    <property type="term" value="C:nuclear speck"/>
    <property type="evidence" value="ECO:0000250"/>
    <property type="project" value="UniProtKB"/>
</dbReference>
<dbReference type="GO" id="GO:0051301">
    <property type="term" value="P:cell division"/>
    <property type="evidence" value="ECO:0007669"/>
    <property type="project" value="UniProtKB-KW"/>
</dbReference>
<dbReference type="GO" id="GO:0045132">
    <property type="term" value="P:meiotic chromosome segregation"/>
    <property type="evidence" value="ECO:0007669"/>
    <property type="project" value="InterPro"/>
</dbReference>
<dbReference type="Gene3D" id="1.20.5.730">
    <property type="entry name" value="Single helix bin"/>
    <property type="match status" value="1"/>
</dbReference>
<dbReference type="InterPro" id="IPR038889">
    <property type="entry name" value="Shugoshin1/2"/>
</dbReference>
<dbReference type="InterPro" id="IPR011515">
    <property type="entry name" value="Shugoshin_C"/>
</dbReference>
<dbReference type="PANTHER" id="PTHR21577">
    <property type="entry name" value="SHUGOSHIN"/>
    <property type="match status" value="1"/>
</dbReference>
<dbReference type="PANTHER" id="PTHR21577:SF3">
    <property type="entry name" value="SHUGOSHIN 1-RELATED"/>
    <property type="match status" value="1"/>
</dbReference>
<dbReference type="Pfam" id="PF07557">
    <property type="entry name" value="Shugoshin_C"/>
    <property type="match status" value="1"/>
</dbReference>
<proteinExistence type="evidence at protein level"/>
<protein>
    <recommendedName>
        <fullName evidence="1">Shugoshin 1</fullName>
    </recommendedName>
    <alternativeName>
        <fullName>Shugoshin-like 1</fullName>
    </alternativeName>
</protein>
<feature type="chain" id="PRO_0000055438" description="Shugoshin 1">
    <location>
        <begin position="1"/>
        <end position="663"/>
    </location>
</feature>
<feature type="region of interest" description="Disordered" evidence="3">
    <location>
        <begin position="207"/>
        <end position="250"/>
    </location>
</feature>
<feature type="region of interest" description="Disordered" evidence="3">
    <location>
        <begin position="278"/>
        <end position="401"/>
    </location>
</feature>
<feature type="region of interest" description="Disordered" evidence="3">
    <location>
        <begin position="417"/>
        <end position="478"/>
    </location>
</feature>
<feature type="coiled-coil region" evidence="2">
    <location>
        <begin position="8"/>
        <end position="29"/>
    </location>
</feature>
<feature type="coiled-coil region" evidence="2">
    <location>
        <begin position="110"/>
        <end position="132"/>
    </location>
</feature>
<feature type="compositionally biased region" description="Basic and acidic residues" evidence="3">
    <location>
        <begin position="231"/>
        <end position="242"/>
    </location>
</feature>
<feature type="compositionally biased region" description="Basic and acidic residues" evidence="3">
    <location>
        <begin position="280"/>
        <end position="304"/>
    </location>
</feature>
<feature type="compositionally biased region" description="Basic and acidic residues" evidence="3">
    <location>
        <begin position="339"/>
        <end position="358"/>
    </location>
</feature>
<feature type="compositionally biased region" description="Basic and acidic residues" evidence="3">
    <location>
        <begin position="366"/>
        <end position="394"/>
    </location>
</feature>
<feature type="compositionally biased region" description="Low complexity" evidence="3">
    <location>
        <begin position="427"/>
        <end position="437"/>
    </location>
</feature>
<feature type="compositionally biased region" description="Basic and acidic residues" evidence="3">
    <location>
        <begin position="443"/>
        <end position="453"/>
    </location>
</feature>
<keyword id="KW-0131">Cell cycle</keyword>
<keyword id="KW-0132">Cell division</keyword>
<keyword id="KW-0137">Centromere</keyword>
<keyword id="KW-0158">Chromosome</keyword>
<keyword id="KW-0159">Chromosome partition</keyword>
<keyword id="KW-0175">Coiled coil</keyword>
<keyword id="KW-0995">Kinetochore</keyword>
<keyword id="KW-0493">Microtubule</keyword>
<keyword id="KW-0498">Mitosis</keyword>
<keyword id="KW-0539">Nucleus</keyword>
<keyword id="KW-1185">Reference proteome</keyword>
<keyword id="KW-0832">Ubl conjugation</keyword>